<organism>
    <name type="scientific">Gossypium hirsutum</name>
    <name type="common">Upland cotton</name>
    <name type="synonym">Gossypium mexicanum</name>
    <dbReference type="NCBI Taxonomy" id="3635"/>
    <lineage>
        <taxon>Eukaryota</taxon>
        <taxon>Viridiplantae</taxon>
        <taxon>Streptophyta</taxon>
        <taxon>Embryophyta</taxon>
        <taxon>Tracheophyta</taxon>
        <taxon>Spermatophyta</taxon>
        <taxon>Magnoliopsida</taxon>
        <taxon>eudicotyledons</taxon>
        <taxon>Gunneridae</taxon>
        <taxon>Pentapetalae</taxon>
        <taxon>rosids</taxon>
        <taxon>malvids</taxon>
        <taxon>Malvales</taxon>
        <taxon>Malvaceae</taxon>
        <taxon>Malvoideae</taxon>
        <taxon>Gossypium</taxon>
    </lineage>
</organism>
<keyword id="KW-0150">Chloroplast</keyword>
<keyword id="KW-0934">Plastid</keyword>
<keyword id="KW-1185">Reference proteome</keyword>
<keyword id="KW-0687">Ribonucleoprotein</keyword>
<keyword id="KW-0689">Ribosomal protein</keyword>
<feature type="chain" id="PRO_0000276504" description="Large ribosomal subunit protein bL33c">
    <location>
        <begin position="1"/>
        <end position="66"/>
    </location>
</feature>
<evidence type="ECO:0000255" key="1">
    <source>
        <dbReference type="HAMAP-Rule" id="MF_00294"/>
    </source>
</evidence>
<evidence type="ECO:0000305" key="2"/>
<sequence>MAKSKDVRVTIILECTSCVRNGVNKESTGISRYITQKNRHNTPSRLELKKFCPYCYKHTIHGEIKK</sequence>
<proteinExistence type="inferred from homology"/>
<comment type="subcellular location">
    <subcellularLocation>
        <location>Plastid</location>
        <location>Chloroplast</location>
    </subcellularLocation>
</comment>
<comment type="similarity">
    <text evidence="1">Belongs to the bacterial ribosomal protein bL33 family.</text>
</comment>
<reference key="1">
    <citation type="journal article" date="2006" name="BMC Genomics">
        <title>The complete chloroplast genome sequence of Gossypium hirsutum: organization and phylogenetic relationships to other angiosperms.</title>
        <authorList>
            <person name="Lee S.-B."/>
            <person name="Kaittanis C."/>
            <person name="Jansen R.K."/>
            <person name="Hostetler J.B."/>
            <person name="Tallon L.J."/>
            <person name="Town C.D."/>
            <person name="Daniell H."/>
        </authorList>
    </citation>
    <scope>NUCLEOTIDE SEQUENCE [LARGE SCALE GENOMIC DNA]</scope>
    <source>
        <strain>cv. Coker 310FR</strain>
    </source>
</reference>
<accession>Q2L929</accession>
<geneLocation type="chloroplast"/>
<protein>
    <recommendedName>
        <fullName evidence="1">Large ribosomal subunit protein bL33c</fullName>
    </recommendedName>
    <alternativeName>
        <fullName evidence="2">50S ribosomal protein L33, chloroplastic</fullName>
    </alternativeName>
</protein>
<dbReference type="EMBL" id="DQ345959">
    <property type="protein sequence ID" value="ABC73649.1"/>
    <property type="molecule type" value="Genomic_DNA"/>
</dbReference>
<dbReference type="RefSeq" id="YP_538956.1">
    <property type="nucleotide sequence ID" value="NC_007944.1"/>
</dbReference>
<dbReference type="GeneID" id="3989126"/>
<dbReference type="KEGG" id="ghi:3989126"/>
<dbReference type="OMA" id="ECTEHKA"/>
<dbReference type="OrthoDB" id="1769at41938"/>
<dbReference type="Proteomes" id="UP000189702">
    <property type="component" value="Chloroplast Pltd"/>
</dbReference>
<dbReference type="GO" id="GO:0009507">
    <property type="term" value="C:chloroplast"/>
    <property type="evidence" value="ECO:0007669"/>
    <property type="project" value="UniProtKB-SubCell"/>
</dbReference>
<dbReference type="GO" id="GO:1990904">
    <property type="term" value="C:ribonucleoprotein complex"/>
    <property type="evidence" value="ECO:0007669"/>
    <property type="project" value="UniProtKB-KW"/>
</dbReference>
<dbReference type="GO" id="GO:0005840">
    <property type="term" value="C:ribosome"/>
    <property type="evidence" value="ECO:0007669"/>
    <property type="project" value="UniProtKB-KW"/>
</dbReference>
<dbReference type="GO" id="GO:0003735">
    <property type="term" value="F:structural constituent of ribosome"/>
    <property type="evidence" value="ECO:0007669"/>
    <property type="project" value="InterPro"/>
</dbReference>
<dbReference type="GO" id="GO:0006412">
    <property type="term" value="P:translation"/>
    <property type="evidence" value="ECO:0007669"/>
    <property type="project" value="UniProtKB-UniRule"/>
</dbReference>
<dbReference type="Gene3D" id="2.20.28.120">
    <property type="entry name" value="Ribosomal protein L33"/>
    <property type="match status" value="1"/>
</dbReference>
<dbReference type="HAMAP" id="MF_00294">
    <property type="entry name" value="Ribosomal_bL33"/>
    <property type="match status" value="1"/>
</dbReference>
<dbReference type="InterPro" id="IPR001705">
    <property type="entry name" value="Ribosomal_bL33"/>
</dbReference>
<dbReference type="InterPro" id="IPR018264">
    <property type="entry name" value="Ribosomal_bL33_CS"/>
</dbReference>
<dbReference type="InterPro" id="IPR038584">
    <property type="entry name" value="Ribosomal_bL33_sf"/>
</dbReference>
<dbReference type="InterPro" id="IPR011332">
    <property type="entry name" value="Ribosomal_zn-bd"/>
</dbReference>
<dbReference type="NCBIfam" id="NF001764">
    <property type="entry name" value="PRK00504.1"/>
    <property type="match status" value="1"/>
</dbReference>
<dbReference type="NCBIfam" id="NF001860">
    <property type="entry name" value="PRK00595.1"/>
    <property type="match status" value="1"/>
</dbReference>
<dbReference type="NCBIfam" id="TIGR01023">
    <property type="entry name" value="rpmG_bact"/>
    <property type="match status" value="1"/>
</dbReference>
<dbReference type="PANTHER" id="PTHR43168">
    <property type="entry name" value="50S RIBOSOMAL PROTEIN L33, CHLOROPLASTIC"/>
    <property type="match status" value="1"/>
</dbReference>
<dbReference type="PANTHER" id="PTHR43168:SF2">
    <property type="entry name" value="LARGE RIBOSOMAL SUBUNIT PROTEIN BL33C"/>
    <property type="match status" value="1"/>
</dbReference>
<dbReference type="Pfam" id="PF00471">
    <property type="entry name" value="Ribosomal_L33"/>
    <property type="match status" value="1"/>
</dbReference>
<dbReference type="SUPFAM" id="SSF57829">
    <property type="entry name" value="Zn-binding ribosomal proteins"/>
    <property type="match status" value="1"/>
</dbReference>
<dbReference type="PROSITE" id="PS00582">
    <property type="entry name" value="RIBOSOMAL_L33"/>
    <property type="match status" value="1"/>
</dbReference>
<name>RK33_GOSHI</name>
<gene>
    <name evidence="1" type="primary">rpl33</name>
</gene>